<organism>
    <name type="scientific">Oryza sativa subsp. japonica</name>
    <name type="common">Rice</name>
    <dbReference type="NCBI Taxonomy" id="39947"/>
    <lineage>
        <taxon>Eukaryota</taxon>
        <taxon>Viridiplantae</taxon>
        <taxon>Streptophyta</taxon>
        <taxon>Embryophyta</taxon>
        <taxon>Tracheophyta</taxon>
        <taxon>Spermatophyta</taxon>
        <taxon>Magnoliopsida</taxon>
        <taxon>Liliopsida</taxon>
        <taxon>Poales</taxon>
        <taxon>Poaceae</taxon>
        <taxon>BOP clade</taxon>
        <taxon>Oryzoideae</taxon>
        <taxon>Oryzeae</taxon>
        <taxon>Oryzinae</taxon>
        <taxon>Oryza</taxon>
        <taxon>Oryza sativa</taxon>
    </lineage>
</organism>
<feature type="chain" id="PRO_0000288525" description="ATP synthase subunit c, chloroplastic">
    <location>
        <begin position="1"/>
        <end position="81"/>
    </location>
</feature>
<feature type="transmembrane region" description="Helical" evidence="1">
    <location>
        <begin position="3"/>
        <end position="23"/>
    </location>
</feature>
<feature type="transmembrane region" description="Helical" evidence="1">
    <location>
        <begin position="57"/>
        <end position="77"/>
    </location>
</feature>
<feature type="site" description="Reversibly protonated during proton transport" evidence="1">
    <location>
        <position position="61"/>
    </location>
</feature>
<name>ATPH_ORYSJ</name>
<geneLocation type="chloroplast"/>
<gene>
    <name evidence="1" type="primary">atpH</name>
    <name type="ORF">Nip042</name>
</gene>
<protein>
    <recommendedName>
        <fullName evidence="1">ATP synthase subunit c, chloroplastic</fullName>
    </recommendedName>
    <alternativeName>
        <fullName evidence="1">ATP synthase F(0) sector subunit c</fullName>
    </alternativeName>
    <alternativeName>
        <fullName evidence="1">ATPase subunit III</fullName>
    </alternativeName>
    <alternativeName>
        <fullName evidence="1">F-type ATPase subunit c</fullName>
        <shortName evidence="1">F-ATPase subunit c</shortName>
    </alternativeName>
    <alternativeName>
        <fullName evidence="1">Lipid-binding protein</fullName>
    </alternativeName>
</protein>
<accession>P0C301</accession>
<accession>P00843</accession>
<accession>P69450</accession>
<accession>Q33180</accession>
<accession>Q6QY78</accession>
<accession>Q7G7F1</accession>
<accession>Q9XPT1</accession>
<sequence length="81" mass="7974">MNPLIAAASVIAAGLAVGLASIGPGVGQGTAAGQAVEGIARQPEAEGKIRGTLLLSLAFMEALTIYGLVVALALLFANPFV</sequence>
<dbReference type="EMBL" id="X15901">
    <property type="protein sequence ID" value="CAA33991.1"/>
    <property type="molecule type" value="Genomic_DNA"/>
</dbReference>
<dbReference type="EMBL" id="AY522330">
    <property type="protein sequence ID" value="AAS46116.1"/>
    <property type="molecule type" value="Genomic_DNA"/>
</dbReference>
<dbReference type="EMBL" id="AC074232">
    <property type="protein sequence ID" value="AAM12484.1"/>
    <property type="molecule type" value="Genomic_DNA"/>
</dbReference>
<dbReference type="EMBL" id="AC091680">
    <property type="protein sequence ID" value="AAM12342.1"/>
    <property type="molecule type" value="Genomic_DNA"/>
</dbReference>
<dbReference type="EMBL" id="AC092750">
    <property type="protein sequence ID" value="AAM08595.1"/>
    <property type="molecule type" value="Genomic_DNA"/>
</dbReference>
<dbReference type="EMBL" id="AC122148">
    <property type="protein sequence ID" value="AAM48260.1"/>
    <property type="molecule type" value="Genomic_DNA"/>
</dbReference>
<dbReference type="PIR" id="JQ0218">
    <property type="entry name" value="LWRZA"/>
</dbReference>
<dbReference type="RefSeq" id="NP_039378.1">
    <property type="nucleotide sequence ID" value="NC_001320.1"/>
</dbReference>
<dbReference type="SMR" id="P0C301"/>
<dbReference type="FunCoup" id="P0C301">
    <property type="interactions" value="174"/>
</dbReference>
<dbReference type="STRING" id="39947.P0C301"/>
<dbReference type="PaxDb" id="39947-P0C301"/>
<dbReference type="EnsemblPlants" id="transcript-atpH">
    <property type="protein sequence ID" value="cds-CAA33991.1"/>
    <property type="gene ID" value="gene-atpH"/>
</dbReference>
<dbReference type="GeneID" id="3131392"/>
<dbReference type="Gramene" id="transcript-atpH">
    <property type="protein sequence ID" value="cds-CAA33991.1"/>
    <property type="gene ID" value="gene-atpH"/>
</dbReference>
<dbReference type="KEGG" id="dosa:atpH"/>
<dbReference type="KEGG" id="osa:3131392"/>
<dbReference type="InParanoid" id="P0C301"/>
<dbReference type="OrthoDB" id="689995at2759"/>
<dbReference type="Proteomes" id="UP000000763">
    <property type="component" value="Chromosome 10"/>
</dbReference>
<dbReference type="Proteomes" id="UP000059680">
    <property type="component" value="Chloroplast"/>
</dbReference>
<dbReference type="GO" id="GO:0009535">
    <property type="term" value="C:chloroplast thylakoid membrane"/>
    <property type="evidence" value="ECO:0007669"/>
    <property type="project" value="UniProtKB-SubCell"/>
</dbReference>
<dbReference type="GO" id="GO:0009536">
    <property type="term" value="C:plastid"/>
    <property type="evidence" value="ECO:0000305"/>
    <property type="project" value="Gramene"/>
</dbReference>
<dbReference type="GO" id="GO:0045259">
    <property type="term" value="C:proton-transporting ATP synthase complex"/>
    <property type="evidence" value="ECO:0007669"/>
    <property type="project" value="UniProtKB-KW"/>
</dbReference>
<dbReference type="GO" id="GO:0033177">
    <property type="term" value="C:proton-transporting two-sector ATPase complex, proton-transporting domain"/>
    <property type="evidence" value="ECO:0007669"/>
    <property type="project" value="InterPro"/>
</dbReference>
<dbReference type="GO" id="GO:0008289">
    <property type="term" value="F:lipid binding"/>
    <property type="evidence" value="ECO:0007669"/>
    <property type="project" value="UniProtKB-KW"/>
</dbReference>
<dbReference type="GO" id="GO:0046933">
    <property type="term" value="F:proton-transporting ATP synthase activity, rotational mechanism"/>
    <property type="evidence" value="ECO:0007669"/>
    <property type="project" value="UniProtKB-UniRule"/>
</dbReference>
<dbReference type="GO" id="GO:0015986">
    <property type="term" value="P:proton motive force-driven ATP synthesis"/>
    <property type="evidence" value="ECO:0000318"/>
    <property type="project" value="GO_Central"/>
</dbReference>
<dbReference type="CDD" id="cd18183">
    <property type="entry name" value="ATP-synt_Fo_c_ATPH"/>
    <property type="match status" value="1"/>
</dbReference>
<dbReference type="FunFam" id="1.20.20.10:FF:000001">
    <property type="entry name" value="ATP synthase subunit c, chloroplastic"/>
    <property type="match status" value="1"/>
</dbReference>
<dbReference type="Gene3D" id="1.20.20.10">
    <property type="entry name" value="F1F0 ATP synthase subunit C"/>
    <property type="match status" value="1"/>
</dbReference>
<dbReference type="HAMAP" id="MF_01396">
    <property type="entry name" value="ATP_synth_c_bact"/>
    <property type="match status" value="1"/>
</dbReference>
<dbReference type="InterPro" id="IPR005953">
    <property type="entry name" value="ATP_synth_csu_bac/chlpt"/>
</dbReference>
<dbReference type="InterPro" id="IPR000454">
    <property type="entry name" value="ATP_synth_F0_csu"/>
</dbReference>
<dbReference type="InterPro" id="IPR020537">
    <property type="entry name" value="ATP_synth_F0_csu_DDCD_BS"/>
</dbReference>
<dbReference type="InterPro" id="IPR038662">
    <property type="entry name" value="ATP_synth_F0_csu_sf"/>
</dbReference>
<dbReference type="InterPro" id="IPR002379">
    <property type="entry name" value="ATPase_proteolipid_c-like_dom"/>
</dbReference>
<dbReference type="InterPro" id="IPR035921">
    <property type="entry name" value="F/V-ATP_Csub_sf"/>
</dbReference>
<dbReference type="NCBIfam" id="TIGR01260">
    <property type="entry name" value="ATP_synt_c"/>
    <property type="match status" value="1"/>
</dbReference>
<dbReference type="NCBIfam" id="NF005608">
    <property type="entry name" value="PRK07354.1"/>
    <property type="match status" value="1"/>
</dbReference>
<dbReference type="PANTHER" id="PTHR10031">
    <property type="entry name" value="ATP SYNTHASE LIPID-BINDING PROTEIN, MITOCHONDRIAL"/>
    <property type="match status" value="1"/>
</dbReference>
<dbReference type="PANTHER" id="PTHR10031:SF0">
    <property type="entry name" value="ATPASE PROTEIN 9"/>
    <property type="match status" value="1"/>
</dbReference>
<dbReference type="Pfam" id="PF00137">
    <property type="entry name" value="ATP-synt_C"/>
    <property type="match status" value="1"/>
</dbReference>
<dbReference type="PRINTS" id="PR00124">
    <property type="entry name" value="ATPASEC"/>
</dbReference>
<dbReference type="SUPFAM" id="SSF81333">
    <property type="entry name" value="F1F0 ATP synthase subunit C"/>
    <property type="match status" value="1"/>
</dbReference>
<dbReference type="PROSITE" id="PS00605">
    <property type="entry name" value="ATPASE_C"/>
    <property type="match status" value="1"/>
</dbReference>
<keyword id="KW-0066">ATP synthesis</keyword>
<keyword id="KW-0138">CF(0)</keyword>
<keyword id="KW-0150">Chloroplast</keyword>
<keyword id="KW-0375">Hydrogen ion transport</keyword>
<keyword id="KW-0406">Ion transport</keyword>
<keyword id="KW-0446">Lipid-binding</keyword>
<keyword id="KW-0472">Membrane</keyword>
<keyword id="KW-0934">Plastid</keyword>
<keyword id="KW-1185">Reference proteome</keyword>
<keyword id="KW-0793">Thylakoid</keyword>
<keyword id="KW-0812">Transmembrane</keyword>
<keyword id="KW-1133">Transmembrane helix</keyword>
<keyword id="KW-0813">Transport</keyword>
<reference key="1">
    <citation type="journal article" date="1989" name="Mol. Gen. Genet.">
        <title>The complete sequence of the rice (Oryza sativa) chloroplast genome: intermolecular recombination between distinct tRNA genes accounts for a major plastid DNA inversion during the evolution of the cereals.</title>
        <authorList>
            <person name="Hiratsuka J."/>
            <person name="Shimada H."/>
            <person name="Whittier R."/>
            <person name="Ishibashi T."/>
            <person name="Sakamoto M."/>
            <person name="Mori M."/>
            <person name="Kondo C."/>
            <person name="Honji Y."/>
            <person name="Sun C.-R."/>
            <person name="Meng B.-Y."/>
            <person name="Li Y.-Q."/>
            <person name="Kanno A."/>
            <person name="Nishizawa Y."/>
            <person name="Hirai A."/>
            <person name="Shinozaki K."/>
            <person name="Sugiura M."/>
        </authorList>
    </citation>
    <scope>NUCLEOTIDE SEQUENCE [LARGE SCALE GENOMIC DNA]</scope>
    <source>
        <strain>cv. Nipponbare</strain>
    </source>
</reference>
<reference key="2">
    <citation type="journal article" date="2004" name="Plant Physiol.">
        <title>A comparison of rice chloroplast genomes.</title>
        <authorList>
            <person name="Tang J."/>
            <person name="Xia H."/>
            <person name="Cao M."/>
            <person name="Zhang X."/>
            <person name="Zeng W."/>
            <person name="Hu S."/>
            <person name="Tong W."/>
            <person name="Wang J."/>
            <person name="Wang J."/>
            <person name="Yu J."/>
            <person name="Yang H."/>
            <person name="Zhu L."/>
        </authorList>
    </citation>
    <scope>NUCLEOTIDE SEQUENCE [LARGE SCALE GENOMIC DNA]</scope>
    <source>
        <strain>cv. Nipponbare</strain>
    </source>
</reference>
<reference key="3">
    <citation type="journal article" date="2003" name="Science">
        <title>In-depth view of structure, activity, and evolution of rice chromosome 10.</title>
        <authorList>
            <person name="Yu Y."/>
            <person name="Rambo T."/>
            <person name="Currie J."/>
            <person name="Saski C."/>
            <person name="Kim H.-R."/>
            <person name="Collura K."/>
            <person name="Thompson S."/>
            <person name="Simmons J."/>
            <person name="Yang T.-J."/>
            <person name="Nah G."/>
            <person name="Patel A.J."/>
            <person name="Thurmond S."/>
            <person name="Henry D."/>
            <person name="Oates R."/>
            <person name="Palmer M."/>
            <person name="Pries G."/>
            <person name="Gibson J."/>
            <person name="Anderson H."/>
            <person name="Paradkar M."/>
            <person name="Crane L."/>
            <person name="Dale J."/>
            <person name="Carver M.B."/>
            <person name="Wood T."/>
            <person name="Frisch D."/>
            <person name="Engler F."/>
            <person name="Soderlund C."/>
            <person name="Palmer L.E."/>
            <person name="Teytelman L."/>
            <person name="Nascimento L."/>
            <person name="De la Bastide M."/>
            <person name="Spiegel L."/>
            <person name="Ware D."/>
            <person name="O'Shaughnessy A."/>
            <person name="Dike S."/>
            <person name="Dedhia N."/>
            <person name="Preston R."/>
            <person name="Huang E."/>
            <person name="Ferraro K."/>
            <person name="Kuit K."/>
            <person name="Miller B."/>
            <person name="Zutavern T."/>
            <person name="Katzenberger F."/>
            <person name="Muller S."/>
            <person name="Balija V."/>
            <person name="Martienssen R.A."/>
            <person name="Stein L."/>
            <person name="Minx P."/>
            <person name="Johnson D."/>
            <person name="Cordum H."/>
            <person name="Mardis E."/>
            <person name="Cheng Z."/>
            <person name="Jiang J."/>
            <person name="Wilson R."/>
            <person name="McCombie W.R."/>
            <person name="Wing R.A."/>
            <person name="Yuan Q."/>
            <person name="Ouyang S."/>
            <person name="Liu J."/>
            <person name="Jones K.M."/>
            <person name="Gansberger K."/>
            <person name="Moffat K."/>
            <person name="Hill J."/>
            <person name="Tsitrin T."/>
            <person name="Overton L."/>
            <person name="Bera J."/>
            <person name="Kim M."/>
            <person name="Jin S."/>
            <person name="Tallon L."/>
            <person name="Ciecko A."/>
            <person name="Pai G."/>
            <person name="Van Aken S."/>
            <person name="Utterback T."/>
            <person name="Reidmuller S."/>
            <person name="Bormann J."/>
            <person name="Feldblyum T."/>
            <person name="Hsiao J."/>
            <person name="Zismann V."/>
            <person name="Blunt S."/>
            <person name="de Vazeille A.R."/>
            <person name="Shaffer T."/>
            <person name="Koo H."/>
            <person name="Suh B."/>
            <person name="Yang Q."/>
            <person name="Haas B."/>
            <person name="Peterson J."/>
            <person name="Pertea M."/>
            <person name="Volfovsky N."/>
            <person name="Wortman J."/>
            <person name="White O."/>
            <person name="Salzberg S.L."/>
            <person name="Fraser C.M."/>
            <person name="Buell C.R."/>
            <person name="Messing J."/>
            <person name="Song R."/>
            <person name="Fuks G."/>
            <person name="Llaca V."/>
            <person name="Kovchak S."/>
            <person name="Young S."/>
            <person name="Bowers J.E."/>
            <person name="Paterson A.H."/>
            <person name="Johns M.A."/>
            <person name="Mao L."/>
            <person name="Pan H."/>
            <person name="Dean R.A."/>
        </authorList>
    </citation>
    <scope>NUCLEOTIDE SEQUENCE [LARGE SCALE GENOMIC DNA] (OS10G0355100 AND OS10G0527100)</scope>
    <source>
        <strain>cv. Nipponbare</strain>
    </source>
</reference>
<comment type="function">
    <text evidence="1">F(1)F(0) ATP synthase produces ATP from ADP in the presence of a proton or sodium gradient. F-type ATPases consist of two structural domains, F(1) containing the extramembraneous catalytic core and F(0) containing the membrane proton channel, linked together by a central stalk and a peripheral stalk. During catalysis, ATP synthesis in the catalytic domain of F(1) is coupled via a rotary mechanism of the central stalk subunits to proton translocation.</text>
</comment>
<comment type="function">
    <text evidence="1">Key component of the F(0) channel; it plays a direct role in translocation across the membrane. A homomeric c-ring of between 10-14 subunits forms the central stalk rotor element with the F(1) delta and epsilon subunits.</text>
</comment>
<comment type="subunit">
    <text evidence="1">F-type ATPases have 2 components, F(1) - the catalytic core - and F(0) - the membrane proton channel. F(1) has five subunits: alpha(3), beta(3), gamma(1), delta(1), epsilon(1). F(0) has four main subunits: a(1), b(1), b'(1) and c(10-14). The alpha and beta chains form an alternating ring which encloses part of the gamma chain. F(1) is attached to F(0) by a central stalk formed by the gamma and epsilon chains, while a peripheral stalk is formed by the delta, b and b' chains.</text>
</comment>
<comment type="subcellular location">
    <subcellularLocation>
        <location evidence="1">Plastid</location>
        <location evidence="1">Chloroplast thylakoid membrane</location>
        <topology evidence="1">Multi-pass membrane protein</topology>
    </subcellularLocation>
</comment>
<comment type="miscellaneous">
    <text>In plastids the F-type ATPase is also known as CF(1)CF(0).</text>
</comment>
<comment type="similarity">
    <text evidence="1">Belongs to the ATPase C chain family.</text>
</comment>
<comment type="caution">
    <text evidence="2">A stretch of the chloroplast genome is duplicated within chromosome 10 resulting in the duplication of the gene. The expression of these duplicated genes (Os10g0355100, Os10g0527100) has not been demonstrated.</text>
</comment>
<proteinExistence type="inferred from homology"/>
<evidence type="ECO:0000255" key="1">
    <source>
        <dbReference type="HAMAP-Rule" id="MF_01396"/>
    </source>
</evidence>
<evidence type="ECO:0000305" key="2"/>